<proteinExistence type="inferred from homology"/>
<name>TRMB_LACAC</name>
<keyword id="KW-0489">Methyltransferase</keyword>
<keyword id="KW-1185">Reference proteome</keyword>
<keyword id="KW-0949">S-adenosyl-L-methionine</keyword>
<keyword id="KW-0808">Transferase</keyword>
<keyword id="KW-0819">tRNA processing</keyword>
<gene>
    <name evidence="2" type="primary">trmB</name>
    <name type="ordered locus">LBA1582</name>
</gene>
<evidence type="ECO:0000250" key="1"/>
<evidence type="ECO:0000255" key="2">
    <source>
        <dbReference type="HAMAP-Rule" id="MF_01057"/>
    </source>
</evidence>
<dbReference type="EC" id="2.1.1.33" evidence="2"/>
<dbReference type="EMBL" id="CP000033">
    <property type="protein sequence ID" value="AAV43399.1"/>
    <property type="molecule type" value="Genomic_DNA"/>
</dbReference>
<dbReference type="RefSeq" id="WP_003548419.1">
    <property type="nucleotide sequence ID" value="NC_006814.3"/>
</dbReference>
<dbReference type="RefSeq" id="YP_194430.1">
    <property type="nucleotide sequence ID" value="NC_006814.3"/>
</dbReference>
<dbReference type="SMR" id="Q5FIS5"/>
<dbReference type="STRING" id="272621.LBA1582"/>
<dbReference type="GeneID" id="93289353"/>
<dbReference type="KEGG" id="lac:LBA1582"/>
<dbReference type="PATRIC" id="fig|272621.13.peg.1504"/>
<dbReference type="eggNOG" id="COG0220">
    <property type="taxonomic scope" value="Bacteria"/>
</dbReference>
<dbReference type="HOGENOM" id="CLU_050910_2_1_9"/>
<dbReference type="OrthoDB" id="9802090at2"/>
<dbReference type="BioCyc" id="LACI272621:G1G49-1546-MONOMER"/>
<dbReference type="UniPathway" id="UPA00989"/>
<dbReference type="Proteomes" id="UP000006381">
    <property type="component" value="Chromosome"/>
</dbReference>
<dbReference type="GO" id="GO:0043527">
    <property type="term" value="C:tRNA methyltransferase complex"/>
    <property type="evidence" value="ECO:0007669"/>
    <property type="project" value="TreeGrafter"/>
</dbReference>
<dbReference type="GO" id="GO:0008176">
    <property type="term" value="F:tRNA (guanine(46)-N7)-methyltransferase activity"/>
    <property type="evidence" value="ECO:0007669"/>
    <property type="project" value="UniProtKB-UniRule"/>
</dbReference>
<dbReference type="CDD" id="cd02440">
    <property type="entry name" value="AdoMet_MTases"/>
    <property type="match status" value="1"/>
</dbReference>
<dbReference type="FunFam" id="3.40.50.150:FF:000035">
    <property type="entry name" value="tRNA (guanine-N(7)-)-methyltransferase"/>
    <property type="match status" value="1"/>
</dbReference>
<dbReference type="Gene3D" id="3.40.50.150">
    <property type="entry name" value="Vaccinia Virus protein VP39"/>
    <property type="match status" value="1"/>
</dbReference>
<dbReference type="HAMAP" id="MF_01057">
    <property type="entry name" value="tRNA_methyltr_TrmB"/>
    <property type="match status" value="1"/>
</dbReference>
<dbReference type="InterPro" id="IPR029063">
    <property type="entry name" value="SAM-dependent_MTases_sf"/>
</dbReference>
<dbReference type="InterPro" id="IPR003358">
    <property type="entry name" value="tRNA_(Gua-N-7)_MeTrfase_Trmb"/>
</dbReference>
<dbReference type="InterPro" id="IPR055361">
    <property type="entry name" value="tRNA_methyltr_TrmB_bact"/>
</dbReference>
<dbReference type="NCBIfam" id="NF001080">
    <property type="entry name" value="PRK00121.2-2"/>
    <property type="match status" value="1"/>
</dbReference>
<dbReference type="NCBIfam" id="TIGR00091">
    <property type="entry name" value="tRNA (guanosine(46)-N7)-methyltransferase TrmB"/>
    <property type="match status" value="1"/>
</dbReference>
<dbReference type="PANTHER" id="PTHR23417">
    <property type="entry name" value="3-DEOXY-D-MANNO-OCTULOSONIC-ACID TRANSFERASE/TRNA GUANINE-N 7 - -METHYLTRANSFERASE"/>
    <property type="match status" value="1"/>
</dbReference>
<dbReference type="PANTHER" id="PTHR23417:SF14">
    <property type="entry name" value="PENTACOTRIPEPTIDE-REPEAT REGION OF PRORP DOMAIN-CONTAINING PROTEIN"/>
    <property type="match status" value="1"/>
</dbReference>
<dbReference type="Pfam" id="PF02390">
    <property type="entry name" value="Methyltransf_4"/>
    <property type="match status" value="1"/>
</dbReference>
<dbReference type="SUPFAM" id="SSF53335">
    <property type="entry name" value="S-adenosyl-L-methionine-dependent methyltransferases"/>
    <property type="match status" value="1"/>
</dbReference>
<dbReference type="PROSITE" id="PS51625">
    <property type="entry name" value="SAM_MT_TRMB"/>
    <property type="match status" value="1"/>
</dbReference>
<feature type="chain" id="PRO_0000229168" description="tRNA (guanine-N(7)-)-methyltransferase">
    <location>
        <begin position="1"/>
        <end position="218"/>
    </location>
</feature>
<feature type="region of interest" description="Interaction with RNA" evidence="2">
    <location>
        <begin position="125"/>
        <end position="130"/>
    </location>
</feature>
<feature type="active site" evidence="1">
    <location>
        <position position="119"/>
    </location>
</feature>
<feature type="binding site" evidence="2">
    <location>
        <position position="45"/>
    </location>
    <ligand>
        <name>S-adenosyl-L-methionine</name>
        <dbReference type="ChEBI" id="CHEBI:59789"/>
    </ligand>
</feature>
<feature type="binding site" evidence="2">
    <location>
        <position position="70"/>
    </location>
    <ligand>
        <name>S-adenosyl-L-methionine</name>
        <dbReference type="ChEBI" id="CHEBI:59789"/>
    </ligand>
</feature>
<feature type="binding site" evidence="2">
    <location>
        <position position="97"/>
    </location>
    <ligand>
        <name>S-adenosyl-L-methionine</name>
        <dbReference type="ChEBI" id="CHEBI:59789"/>
    </ligand>
</feature>
<feature type="binding site" evidence="2">
    <location>
        <position position="119"/>
    </location>
    <ligand>
        <name>S-adenosyl-L-methionine</name>
        <dbReference type="ChEBI" id="CHEBI:59789"/>
    </ligand>
</feature>
<feature type="binding site" evidence="2">
    <location>
        <position position="123"/>
    </location>
    <ligand>
        <name>substrate</name>
    </ligand>
</feature>
<feature type="binding site" evidence="2">
    <location>
        <position position="155"/>
    </location>
    <ligand>
        <name>substrate</name>
    </ligand>
</feature>
<feature type="binding site" evidence="2">
    <location>
        <begin position="195"/>
        <end position="198"/>
    </location>
    <ligand>
        <name>substrate</name>
    </ligand>
</feature>
<sequence>MRLRNKPWAVKLVNDHPESVLQNPNPDEKIYWEKRFGNDHPIEIEVGSGKGHFITTLAEQHPEKNFVALELQTTAAGIILRTKLKKGLDNLQILRGDAADINCFFDKNTTDVIYLNFSDPWPKSRHEKRRLTYKSFLNKYQQVLKPEGHIEFKTDNSGLFAYSVQSMNNYGMFFDFVSVDLHHEKPEIVEKNIETEYEHKFAAKGNPIYALHAHFETK</sequence>
<organism>
    <name type="scientific">Lactobacillus acidophilus (strain ATCC 700396 / NCK56 / N2 / NCFM)</name>
    <dbReference type="NCBI Taxonomy" id="272621"/>
    <lineage>
        <taxon>Bacteria</taxon>
        <taxon>Bacillati</taxon>
        <taxon>Bacillota</taxon>
        <taxon>Bacilli</taxon>
        <taxon>Lactobacillales</taxon>
        <taxon>Lactobacillaceae</taxon>
        <taxon>Lactobacillus</taxon>
    </lineage>
</organism>
<protein>
    <recommendedName>
        <fullName evidence="2">tRNA (guanine-N(7)-)-methyltransferase</fullName>
        <ecNumber evidence="2">2.1.1.33</ecNumber>
    </recommendedName>
    <alternativeName>
        <fullName evidence="2">tRNA (guanine(46)-N(7))-methyltransferase</fullName>
    </alternativeName>
    <alternativeName>
        <fullName evidence="2">tRNA(m7G46)-methyltransferase</fullName>
    </alternativeName>
</protein>
<comment type="function">
    <text evidence="2">Catalyzes the formation of N(7)-methylguanine at position 46 (m7G46) in tRNA.</text>
</comment>
<comment type="catalytic activity">
    <reaction evidence="2">
        <text>guanosine(46) in tRNA + S-adenosyl-L-methionine = N(7)-methylguanosine(46) in tRNA + S-adenosyl-L-homocysteine</text>
        <dbReference type="Rhea" id="RHEA:42708"/>
        <dbReference type="Rhea" id="RHEA-COMP:10188"/>
        <dbReference type="Rhea" id="RHEA-COMP:10189"/>
        <dbReference type="ChEBI" id="CHEBI:57856"/>
        <dbReference type="ChEBI" id="CHEBI:59789"/>
        <dbReference type="ChEBI" id="CHEBI:74269"/>
        <dbReference type="ChEBI" id="CHEBI:74480"/>
        <dbReference type="EC" id="2.1.1.33"/>
    </reaction>
</comment>
<comment type="pathway">
    <text evidence="2">tRNA modification; N(7)-methylguanine-tRNA biosynthesis.</text>
</comment>
<comment type="similarity">
    <text evidence="2">Belongs to the class I-like SAM-binding methyltransferase superfamily. TrmB family.</text>
</comment>
<accession>Q5FIS5</accession>
<reference key="1">
    <citation type="journal article" date="2005" name="Proc. Natl. Acad. Sci. U.S.A.">
        <title>Complete genome sequence of the probiotic lactic acid bacterium Lactobacillus acidophilus NCFM.</title>
        <authorList>
            <person name="Altermann E."/>
            <person name="Russell W.M."/>
            <person name="Azcarate-Peril M.A."/>
            <person name="Barrangou R."/>
            <person name="Buck B.L."/>
            <person name="McAuliffe O."/>
            <person name="Souther N."/>
            <person name="Dobson A."/>
            <person name="Duong T."/>
            <person name="Callanan M."/>
            <person name="Lick S."/>
            <person name="Hamrick A."/>
            <person name="Cano R."/>
            <person name="Klaenhammer T.R."/>
        </authorList>
    </citation>
    <scope>NUCLEOTIDE SEQUENCE [LARGE SCALE GENOMIC DNA]</scope>
    <source>
        <strain>ATCC 700396 / NCK56 / N2 / NCFM</strain>
    </source>
</reference>